<protein>
    <recommendedName>
        <fullName evidence="1">Gamma-glutamyl phosphate reductase</fullName>
        <shortName evidence="1">GPR</shortName>
        <ecNumber evidence="1">1.2.1.41</ecNumber>
    </recommendedName>
    <alternativeName>
        <fullName evidence="1">Glutamate-5-semialdehyde dehydrogenase</fullName>
    </alternativeName>
    <alternativeName>
        <fullName evidence="1">Glutamyl-gamma-semialdehyde dehydrogenase</fullName>
        <shortName evidence="1">GSA dehydrogenase</shortName>
    </alternativeName>
</protein>
<accession>Q5WWN7</accession>
<comment type="function">
    <text evidence="1">Catalyzes the NADPH-dependent reduction of L-glutamate 5-phosphate into L-glutamate 5-semialdehyde and phosphate. The product spontaneously undergoes cyclization to form 1-pyrroline-5-carboxylate.</text>
</comment>
<comment type="catalytic activity">
    <reaction evidence="1">
        <text>L-glutamate 5-semialdehyde + phosphate + NADP(+) = L-glutamyl 5-phosphate + NADPH + H(+)</text>
        <dbReference type="Rhea" id="RHEA:19541"/>
        <dbReference type="ChEBI" id="CHEBI:15378"/>
        <dbReference type="ChEBI" id="CHEBI:43474"/>
        <dbReference type="ChEBI" id="CHEBI:57783"/>
        <dbReference type="ChEBI" id="CHEBI:58066"/>
        <dbReference type="ChEBI" id="CHEBI:58274"/>
        <dbReference type="ChEBI" id="CHEBI:58349"/>
        <dbReference type="EC" id="1.2.1.41"/>
    </reaction>
</comment>
<comment type="pathway">
    <text evidence="1">Amino-acid biosynthesis; L-proline biosynthesis; L-glutamate 5-semialdehyde from L-glutamate: step 2/2.</text>
</comment>
<comment type="subcellular location">
    <subcellularLocation>
        <location evidence="1">Cytoplasm</location>
    </subcellularLocation>
</comment>
<comment type="similarity">
    <text evidence="1">Belongs to the gamma-glutamyl phosphate reductase family.</text>
</comment>
<dbReference type="EC" id="1.2.1.41" evidence="1"/>
<dbReference type="EMBL" id="CR628337">
    <property type="protein sequence ID" value="CAH15655.1"/>
    <property type="molecule type" value="Genomic_DNA"/>
</dbReference>
<dbReference type="RefSeq" id="WP_011215473.1">
    <property type="nucleotide sequence ID" value="NC_006369.1"/>
</dbReference>
<dbReference type="SMR" id="Q5WWN7"/>
<dbReference type="KEGG" id="lpf:lpl1415"/>
<dbReference type="LegioList" id="lpl1415"/>
<dbReference type="HOGENOM" id="CLU_030231_0_0_6"/>
<dbReference type="UniPathway" id="UPA00098">
    <property type="reaction ID" value="UER00360"/>
</dbReference>
<dbReference type="Proteomes" id="UP000002517">
    <property type="component" value="Chromosome"/>
</dbReference>
<dbReference type="GO" id="GO:0005737">
    <property type="term" value="C:cytoplasm"/>
    <property type="evidence" value="ECO:0007669"/>
    <property type="project" value="UniProtKB-SubCell"/>
</dbReference>
<dbReference type="GO" id="GO:0004350">
    <property type="term" value="F:glutamate-5-semialdehyde dehydrogenase activity"/>
    <property type="evidence" value="ECO:0007669"/>
    <property type="project" value="UniProtKB-UniRule"/>
</dbReference>
<dbReference type="GO" id="GO:0050661">
    <property type="term" value="F:NADP binding"/>
    <property type="evidence" value="ECO:0007669"/>
    <property type="project" value="InterPro"/>
</dbReference>
<dbReference type="GO" id="GO:0055129">
    <property type="term" value="P:L-proline biosynthetic process"/>
    <property type="evidence" value="ECO:0007669"/>
    <property type="project" value="UniProtKB-UniRule"/>
</dbReference>
<dbReference type="CDD" id="cd07079">
    <property type="entry name" value="ALDH_F18-19_ProA-GPR"/>
    <property type="match status" value="1"/>
</dbReference>
<dbReference type="Gene3D" id="3.40.605.10">
    <property type="entry name" value="Aldehyde Dehydrogenase, Chain A, domain 1"/>
    <property type="match status" value="1"/>
</dbReference>
<dbReference type="Gene3D" id="3.40.309.10">
    <property type="entry name" value="Aldehyde Dehydrogenase, Chain A, domain 2"/>
    <property type="match status" value="1"/>
</dbReference>
<dbReference type="HAMAP" id="MF_00412">
    <property type="entry name" value="ProA"/>
    <property type="match status" value="1"/>
</dbReference>
<dbReference type="InterPro" id="IPR016161">
    <property type="entry name" value="Ald_DH/histidinol_DH"/>
</dbReference>
<dbReference type="InterPro" id="IPR016163">
    <property type="entry name" value="Ald_DH_C"/>
</dbReference>
<dbReference type="InterPro" id="IPR016162">
    <property type="entry name" value="Ald_DH_N"/>
</dbReference>
<dbReference type="InterPro" id="IPR020593">
    <property type="entry name" value="G-glutamylP_reductase_CS"/>
</dbReference>
<dbReference type="InterPro" id="IPR012134">
    <property type="entry name" value="Glu-5-SA_DH"/>
</dbReference>
<dbReference type="InterPro" id="IPR000965">
    <property type="entry name" value="GPR_dom"/>
</dbReference>
<dbReference type="NCBIfam" id="NF001221">
    <property type="entry name" value="PRK00197.1"/>
    <property type="match status" value="1"/>
</dbReference>
<dbReference type="NCBIfam" id="TIGR00407">
    <property type="entry name" value="proA"/>
    <property type="match status" value="1"/>
</dbReference>
<dbReference type="PANTHER" id="PTHR11063:SF8">
    <property type="entry name" value="DELTA-1-PYRROLINE-5-CARBOXYLATE SYNTHASE"/>
    <property type="match status" value="1"/>
</dbReference>
<dbReference type="PANTHER" id="PTHR11063">
    <property type="entry name" value="GLUTAMATE SEMIALDEHYDE DEHYDROGENASE"/>
    <property type="match status" value="1"/>
</dbReference>
<dbReference type="PIRSF" id="PIRSF000151">
    <property type="entry name" value="GPR"/>
    <property type="match status" value="1"/>
</dbReference>
<dbReference type="SUPFAM" id="SSF53720">
    <property type="entry name" value="ALDH-like"/>
    <property type="match status" value="1"/>
</dbReference>
<dbReference type="PROSITE" id="PS01223">
    <property type="entry name" value="PROA"/>
    <property type="match status" value="1"/>
</dbReference>
<feature type="chain" id="PRO_0000189740" description="Gamma-glutamyl phosphate reductase">
    <location>
        <begin position="1"/>
        <end position="417"/>
    </location>
</feature>
<keyword id="KW-0028">Amino-acid biosynthesis</keyword>
<keyword id="KW-0963">Cytoplasm</keyword>
<keyword id="KW-0521">NADP</keyword>
<keyword id="KW-0560">Oxidoreductase</keyword>
<keyword id="KW-0641">Proline biosynthesis</keyword>
<organism>
    <name type="scientific">Legionella pneumophila (strain Lens)</name>
    <dbReference type="NCBI Taxonomy" id="297245"/>
    <lineage>
        <taxon>Bacteria</taxon>
        <taxon>Pseudomonadati</taxon>
        <taxon>Pseudomonadota</taxon>
        <taxon>Gammaproteobacteria</taxon>
        <taxon>Legionellales</taxon>
        <taxon>Legionellaceae</taxon>
        <taxon>Legionella</taxon>
    </lineage>
</organism>
<sequence length="417" mass="46050">MNTDIANQLRAAKKATTDLNLIQSDTRTIILETLAANLEKHIENIIQENQKDLSLMLEQDPRYDRLLLNKERILSLANDVRKVASLPNPLGVSLLEKSMPNGLSIKKITVPLGVIAVIYESRPNVTIDIFSLCFKSGNVCILKGGKEAHFTNSYLLLLIKNTLKNFNINTDIVCLLPPERALMTQLLNATGLVDLCIPRGSQNLINFVRDNAKIPVIETGAGIVHTYFDKSGDLGKGKKIINNAKTRRVSVCNALDTLIIHADRLKDLPELVETLSQKHVIIYADQDAYHVLDKNYPEQLLIKAKPQDFGHEFLDYKLAIKTVPNIKAAIGHIQQFSSHHSEAIIAEDESAIDQFLIEVDAAAVYANASTAFTDGGEFGLGAEIGISTQKVHARGPMGLEALTSYKWVIRGTGQIRD</sequence>
<name>PROA_LEGPL</name>
<proteinExistence type="inferred from homology"/>
<gene>
    <name evidence="1" type="primary">proA</name>
    <name type="ordered locus">lpl1415</name>
</gene>
<reference key="1">
    <citation type="journal article" date="2004" name="Nat. Genet.">
        <title>Evidence in the Legionella pneumophila genome for exploitation of host cell functions and high genome plasticity.</title>
        <authorList>
            <person name="Cazalet C."/>
            <person name="Rusniok C."/>
            <person name="Brueggemann H."/>
            <person name="Zidane N."/>
            <person name="Magnier A."/>
            <person name="Ma L."/>
            <person name="Tichit M."/>
            <person name="Jarraud S."/>
            <person name="Bouchier C."/>
            <person name="Vandenesch F."/>
            <person name="Kunst F."/>
            <person name="Etienne J."/>
            <person name="Glaser P."/>
            <person name="Buchrieser C."/>
        </authorList>
    </citation>
    <scope>NUCLEOTIDE SEQUENCE [LARGE SCALE GENOMIC DNA]</scope>
    <source>
        <strain>Lens</strain>
    </source>
</reference>
<evidence type="ECO:0000255" key="1">
    <source>
        <dbReference type="HAMAP-Rule" id="MF_00412"/>
    </source>
</evidence>